<organism>
    <name type="scientific">Shigella boydii serotype 18 (strain CDC 3083-94 / BS512)</name>
    <dbReference type="NCBI Taxonomy" id="344609"/>
    <lineage>
        <taxon>Bacteria</taxon>
        <taxon>Pseudomonadati</taxon>
        <taxon>Pseudomonadota</taxon>
        <taxon>Gammaproteobacteria</taxon>
        <taxon>Enterobacterales</taxon>
        <taxon>Enterobacteriaceae</taxon>
        <taxon>Shigella</taxon>
    </lineage>
</organism>
<comment type="function">
    <text evidence="1">Probably acts as an electrical shunt for an outwardly-directed proton pump that is linked to amino acid decarboxylation, as part of the extreme acid resistance (XAR) response.</text>
</comment>
<comment type="subcellular location">
    <subcellularLocation>
        <location evidence="1">Cell inner membrane</location>
        <topology evidence="1">Multi-pass membrane protein</topology>
    </subcellularLocation>
</comment>
<comment type="similarity">
    <text evidence="1">Belongs to the chloride channel (TC 2.A.49) family. ClcB subfamily.</text>
</comment>
<feature type="chain" id="PRO_1000138687" description="Voltage-gated ClC-type chloride channel ClcB">
    <location>
        <begin position="1"/>
        <end position="418"/>
    </location>
</feature>
<feature type="transmembrane region" description="Helical" evidence="1">
    <location>
        <begin position="5"/>
        <end position="25"/>
    </location>
</feature>
<feature type="transmembrane region" description="Helical" evidence="1">
    <location>
        <begin position="54"/>
        <end position="74"/>
    </location>
</feature>
<feature type="transmembrane region" description="Helical" evidence="1">
    <location>
        <begin position="146"/>
        <end position="166"/>
    </location>
</feature>
<feature type="transmembrane region" description="Helical" evidence="1">
    <location>
        <begin position="168"/>
        <end position="188"/>
    </location>
</feature>
<feature type="transmembrane region" description="Helical" evidence="1">
    <location>
        <begin position="222"/>
        <end position="242"/>
    </location>
</feature>
<feature type="transmembrane region" description="Helical" evidence="1">
    <location>
        <begin position="258"/>
        <end position="278"/>
    </location>
</feature>
<feature type="transmembrane region" description="Helical" evidence="1">
    <location>
        <begin position="291"/>
        <end position="311"/>
    </location>
</feature>
<feature type="transmembrane region" description="Helical" evidence="1">
    <location>
        <begin position="316"/>
        <end position="336"/>
    </location>
</feature>
<feature type="transmembrane region" description="Helical" evidence="1">
    <location>
        <begin position="352"/>
        <end position="372"/>
    </location>
</feature>
<feature type="transmembrane region" description="Helical" evidence="1">
    <location>
        <begin position="380"/>
        <end position="400"/>
    </location>
</feature>
<name>CLCB_SHIB3</name>
<gene>
    <name evidence="1" type="primary">clcB</name>
    <name type="ordered locus">SbBS512_E1779</name>
</gene>
<accession>B2U1Q2</accession>
<protein>
    <recommendedName>
        <fullName evidence="1">Voltage-gated ClC-type chloride channel ClcB</fullName>
    </recommendedName>
</protein>
<reference key="1">
    <citation type="submission" date="2008-05" db="EMBL/GenBank/DDBJ databases">
        <title>Complete sequence of Shigella boydii serotype 18 strain BS512.</title>
        <authorList>
            <person name="Rasko D.A."/>
            <person name="Rosovitz M."/>
            <person name="Maurelli A.T."/>
            <person name="Myers G."/>
            <person name="Seshadri R."/>
            <person name="Cer R."/>
            <person name="Jiang L."/>
            <person name="Ravel J."/>
            <person name="Sebastian Y."/>
        </authorList>
    </citation>
    <scope>NUCLEOTIDE SEQUENCE [LARGE SCALE GENOMIC DNA]</scope>
    <source>
        <strain>CDC 3083-94 / BS512</strain>
    </source>
</reference>
<dbReference type="EMBL" id="CP001063">
    <property type="protein sequence ID" value="ACD08188.1"/>
    <property type="molecule type" value="Genomic_DNA"/>
</dbReference>
<dbReference type="SMR" id="B2U1Q2"/>
<dbReference type="STRING" id="344609.SbBS512_E1779"/>
<dbReference type="KEGG" id="sbc:SbBS512_E1779"/>
<dbReference type="HOGENOM" id="CLU_015263_5_2_6"/>
<dbReference type="Proteomes" id="UP000001030">
    <property type="component" value="Chromosome"/>
</dbReference>
<dbReference type="GO" id="GO:0034707">
    <property type="term" value="C:chloride channel complex"/>
    <property type="evidence" value="ECO:0007669"/>
    <property type="project" value="UniProtKB-KW"/>
</dbReference>
<dbReference type="GO" id="GO:0005886">
    <property type="term" value="C:plasma membrane"/>
    <property type="evidence" value="ECO:0007669"/>
    <property type="project" value="UniProtKB-SubCell"/>
</dbReference>
<dbReference type="GO" id="GO:0005247">
    <property type="term" value="F:voltage-gated chloride channel activity"/>
    <property type="evidence" value="ECO:0007669"/>
    <property type="project" value="UniProtKB-UniRule"/>
</dbReference>
<dbReference type="GO" id="GO:0010447">
    <property type="term" value="P:response to acidic pH"/>
    <property type="evidence" value="ECO:0007669"/>
    <property type="project" value="InterPro"/>
</dbReference>
<dbReference type="CDD" id="cd00400">
    <property type="entry name" value="Voltage_gated_ClC"/>
    <property type="match status" value="1"/>
</dbReference>
<dbReference type="FunFam" id="1.10.3080.10:FF:000010">
    <property type="entry name" value="Voltage-gated ClC-type chloride channel ClcB"/>
    <property type="match status" value="1"/>
</dbReference>
<dbReference type="Gene3D" id="1.10.3080.10">
    <property type="entry name" value="Clc chloride channel"/>
    <property type="match status" value="1"/>
</dbReference>
<dbReference type="HAMAP" id="MF_01203">
    <property type="entry name" value="CLC_ClcB"/>
    <property type="match status" value="1"/>
</dbReference>
<dbReference type="InterPro" id="IPR014743">
    <property type="entry name" value="Cl-channel_core"/>
</dbReference>
<dbReference type="InterPro" id="IPR023790">
    <property type="entry name" value="Cl-channel_volt-gated_ClcB"/>
</dbReference>
<dbReference type="InterPro" id="IPR001807">
    <property type="entry name" value="ClC"/>
</dbReference>
<dbReference type="InterPro" id="IPR050368">
    <property type="entry name" value="ClC-type_chloride_channel"/>
</dbReference>
<dbReference type="NCBIfam" id="NF002437">
    <property type="entry name" value="PRK01610.1"/>
    <property type="match status" value="1"/>
</dbReference>
<dbReference type="PANTHER" id="PTHR43427">
    <property type="entry name" value="CHLORIDE CHANNEL PROTEIN CLC-E"/>
    <property type="match status" value="1"/>
</dbReference>
<dbReference type="PANTHER" id="PTHR43427:SF6">
    <property type="entry name" value="CHLORIDE CHANNEL PROTEIN CLC-E"/>
    <property type="match status" value="1"/>
</dbReference>
<dbReference type="Pfam" id="PF00654">
    <property type="entry name" value="Voltage_CLC"/>
    <property type="match status" value="1"/>
</dbReference>
<dbReference type="PRINTS" id="PR00762">
    <property type="entry name" value="CLCHANNEL"/>
</dbReference>
<dbReference type="SUPFAM" id="SSF81340">
    <property type="entry name" value="Clc chloride channel"/>
    <property type="match status" value="1"/>
</dbReference>
<proteinExistence type="inferred from homology"/>
<sequence>MFRRLLIATVVGILAAFAVAGFRHAMLLLEWLFLNNDSGSLVNAATNLSPWRRLLTPALGGLAAGLLLMGWQKFTQQRPHAPTDYMEALQTDGQFDYAASLVKSLASLLVVTSGSAIGREGAMILLAALAASCFAQRFTPRQEWKLWIACGAAAGMAAAYRAPLAGSLFIAEVLFGTMMLASLGPVIISAVVALLVSNLINHSDALLYNVQLSVTVQARDYALIISTGVLAGLCGPLLLTLMNACHRGFVSLKLAPPWQLALGGVIVGLLSLFTPAVWGNGYSTVQSFLTAPPLLMIIAGIFLCKLCAVLASSGSGAPGGVFTPTLFIGLAIGMLYGRSLGLWFPDGEEITLLLGLTEMATLLAATTHAPIMSTLMICEMTGEYQLLPGLLIACVIASVISRTLHRDSIYRQHTAQHS</sequence>
<evidence type="ECO:0000255" key="1">
    <source>
        <dbReference type="HAMAP-Rule" id="MF_01203"/>
    </source>
</evidence>
<keyword id="KW-0997">Cell inner membrane</keyword>
<keyword id="KW-1003">Cell membrane</keyword>
<keyword id="KW-0868">Chloride</keyword>
<keyword id="KW-0869">Chloride channel</keyword>
<keyword id="KW-0407">Ion channel</keyword>
<keyword id="KW-0406">Ion transport</keyword>
<keyword id="KW-0472">Membrane</keyword>
<keyword id="KW-1185">Reference proteome</keyword>
<keyword id="KW-0812">Transmembrane</keyword>
<keyword id="KW-1133">Transmembrane helix</keyword>
<keyword id="KW-0813">Transport</keyword>
<keyword id="KW-0851">Voltage-gated channel</keyword>